<dbReference type="EMBL" id="AY916449">
    <property type="protein sequence ID" value="AAW82540.1"/>
    <property type="molecule type" value="Genomic_DNA"/>
</dbReference>
<dbReference type="EMBL" id="AY916449">
    <property type="protein sequence ID" value="AAW82553.1"/>
    <property type="molecule type" value="Genomic_DNA"/>
</dbReference>
<dbReference type="RefSeq" id="YP_358622.1">
    <property type="nucleotide sequence ID" value="NC_007499.1"/>
</dbReference>
<dbReference type="RefSeq" id="YP_358648.1">
    <property type="nucleotide sequence ID" value="NC_007499.1"/>
</dbReference>
<dbReference type="SMR" id="Q3BAH0"/>
<dbReference type="GeneID" id="3741721"/>
<dbReference type="GeneID" id="3741760"/>
<dbReference type="GO" id="GO:0009507">
    <property type="term" value="C:chloroplast"/>
    <property type="evidence" value="ECO:0007669"/>
    <property type="project" value="UniProtKB-SubCell"/>
</dbReference>
<dbReference type="GO" id="GO:0005763">
    <property type="term" value="C:mitochondrial small ribosomal subunit"/>
    <property type="evidence" value="ECO:0007669"/>
    <property type="project" value="TreeGrafter"/>
</dbReference>
<dbReference type="GO" id="GO:0019843">
    <property type="term" value="F:rRNA binding"/>
    <property type="evidence" value="ECO:0007669"/>
    <property type="project" value="UniProtKB-UniRule"/>
</dbReference>
<dbReference type="GO" id="GO:0003735">
    <property type="term" value="F:structural constituent of ribosome"/>
    <property type="evidence" value="ECO:0007669"/>
    <property type="project" value="InterPro"/>
</dbReference>
<dbReference type="GO" id="GO:0000028">
    <property type="term" value="P:ribosomal small subunit assembly"/>
    <property type="evidence" value="ECO:0007669"/>
    <property type="project" value="TreeGrafter"/>
</dbReference>
<dbReference type="GO" id="GO:0006412">
    <property type="term" value="P:translation"/>
    <property type="evidence" value="ECO:0007669"/>
    <property type="project" value="UniProtKB-UniRule"/>
</dbReference>
<dbReference type="FunFam" id="3.30.860.10:FF:000001">
    <property type="entry name" value="30S ribosomal protein S19"/>
    <property type="match status" value="1"/>
</dbReference>
<dbReference type="Gene3D" id="3.30.860.10">
    <property type="entry name" value="30s Ribosomal Protein S19, Chain A"/>
    <property type="match status" value="1"/>
</dbReference>
<dbReference type="HAMAP" id="MF_00531">
    <property type="entry name" value="Ribosomal_uS19"/>
    <property type="match status" value="1"/>
</dbReference>
<dbReference type="InterPro" id="IPR002222">
    <property type="entry name" value="Ribosomal_uS19"/>
</dbReference>
<dbReference type="InterPro" id="IPR005732">
    <property type="entry name" value="Ribosomal_uS19_bac-type"/>
</dbReference>
<dbReference type="InterPro" id="IPR020934">
    <property type="entry name" value="Ribosomal_uS19_CS"/>
</dbReference>
<dbReference type="InterPro" id="IPR023575">
    <property type="entry name" value="Ribosomal_uS19_SF"/>
</dbReference>
<dbReference type="NCBIfam" id="TIGR01050">
    <property type="entry name" value="rpsS_bact"/>
    <property type="match status" value="1"/>
</dbReference>
<dbReference type="PANTHER" id="PTHR11880">
    <property type="entry name" value="RIBOSOMAL PROTEIN S19P FAMILY MEMBER"/>
    <property type="match status" value="1"/>
</dbReference>
<dbReference type="PANTHER" id="PTHR11880:SF8">
    <property type="entry name" value="SMALL RIBOSOMAL SUBUNIT PROTEIN US19M"/>
    <property type="match status" value="1"/>
</dbReference>
<dbReference type="Pfam" id="PF00203">
    <property type="entry name" value="Ribosomal_S19"/>
    <property type="match status" value="1"/>
</dbReference>
<dbReference type="PIRSF" id="PIRSF002144">
    <property type="entry name" value="Ribosomal_S19"/>
    <property type="match status" value="1"/>
</dbReference>
<dbReference type="PRINTS" id="PR00975">
    <property type="entry name" value="RIBOSOMALS19"/>
</dbReference>
<dbReference type="SUPFAM" id="SSF54570">
    <property type="entry name" value="Ribosomal protein S19"/>
    <property type="match status" value="1"/>
</dbReference>
<dbReference type="PROSITE" id="PS00323">
    <property type="entry name" value="RIBOSOMAL_S19"/>
    <property type="match status" value="1"/>
</dbReference>
<name>RR19_PHAAO</name>
<sequence>MTRSLKKNPFVANHLLGRIEKLNRREEKEIIVTWSRASTIIPTMIGHTIAIHNGKEHLPIYITDRMVGHKLGEFAPTLTFVRHARNDKKSRR</sequence>
<evidence type="ECO:0000255" key="1">
    <source>
        <dbReference type="HAMAP-Rule" id="MF_00531"/>
    </source>
</evidence>
<evidence type="ECO:0000305" key="2"/>
<feature type="chain" id="PRO_0000276918" description="Small ribosomal subunit protein uS19c">
    <location>
        <begin position="1"/>
        <end position="92"/>
    </location>
</feature>
<accession>Q3BAH0</accession>
<organism>
    <name type="scientific">Phalaenopsis aphrodite subsp. formosana</name>
    <name type="common">Moth orchid</name>
    <dbReference type="NCBI Taxonomy" id="308872"/>
    <lineage>
        <taxon>Eukaryota</taxon>
        <taxon>Viridiplantae</taxon>
        <taxon>Streptophyta</taxon>
        <taxon>Embryophyta</taxon>
        <taxon>Tracheophyta</taxon>
        <taxon>Spermatophyta</taxon>
        <taxon>Magnoliopsida</taxon>
        <taxon>Liliopsida</taxon>
        <taxon>Asparagales</taxon>
        <taxon>Orchidaceae</taxon>
        <taxon>Epidendroideae</taxon>
        <taxon>Vandeae</taxon>
        <taxon>Aeridinae</taxon>
        <taxon>Phalaenopsis</taxon>
    </lineage>
</organism>
<geneLocation type="chloroplast"/>
<protein>
    <recommendedName>
        <fullName evidence="1">Small ribosomal subunit protein uS19c</fullName>
    </recommendedName>
    <alternativeName>
        <fullName evidence="2">30S ribosomal protein S19, chloroplastic</fullName>
    </alternativeName>
</protein>
<comment type="function">
    <text evidence="1">Protein S19 forms a complex with S13 that binds strongly to the 16S ribosomal RNA.</text>
</comment>
<comment type="subcellular location">
    <subcellularLocation>
        <location>Plastid</location>
        <location>Chloroplast</location>
    </subcellularLocation>
</comment>
<comment type="similarity">
    <text evidence="1">Belongs to the universal ribosomal protein uS19 family.</text>
</comment>
<reference key="1">
    <citation type="journal article" date="2006" name="Mol. Biol. Evol.">
        <title>The chloroplast genome of Phalaenopsis aphrodite (Orchidaceae): comparative analysis of evolutionary rate with that of grasses and its phylogenetic implications.</title>
        <authorList>
            <person name="Chang C.-C."/>
            <person name="Lin H.-C."/>
            <person name="Lin I.-P."/>
            <person name="Chow T.-Y."/>
            <person name="Chen H.-H."/>
            <person name="Chen W.-H."/>
            <person name="Cheng C.-H."/>
            <person name="Lin C.-Y."/>
            <person name="Liu S.-M."/>
            <person name="Chang C.-C."/>
            <person name="Chaw S.-M."/>
        </authorList>
    </citation>
    <scope>NUCLEOTIDE SEQUENCE [LARGE SCALE GENOMIC DNA]</scope>
    <source>
        <strain>cv. Taisugar TS-97</strain>
    </source>
</reference>
<proteinExistence type="inferred from homology"/>
<gene>
    <name evidence="1" type="primary">rps19</name>
</gene>
<keyword id="KW-0150">Chloroplast</keyword>
<keyword id="KW-0934">Plastid</keyword>
<keyword id="KW-0687">Ribonucleoprotein</keyword>
<keyword id="KW-0689">Ribosomal protein</keyword>
<keyword id="KW-0694">RNA-binding</keyword>
<keyword id="KW-0699">rRNA-binding</keyword>